<reference key="1">
    <citation type="submission" date="2008-01" db="EMBL/GenBank/DDBJ databases">
        <authorList>
            <consortium name="NIH - Xenopus Gene Collection (XGC) project"/>
        </authorList>
    </citation>
    <scope>NUCLEOTIDE SEQUENCE [LARGE SCALE MRNA]</scope>
    <source>
        <tissue>Testis</tissue>
    </source>
</reference>
<protein>
    <recommendedName>
        <fullName>Enolase 4</fullName>
        <ecNumber evidence="2">4.2.1.11</ecNumber>
    </recommendedName>
    <alternativeName>
        <fullName>2-phospho-D-glycerate hydro-lyase</fullName>
    </alternativeName>
</protein>
<keyword id="KW-0324">Glycolysis</keyword>
<keyword id="KW-0456">Lyase</keyword>
<keyword id="KW-1185">Reference proteome</keyword>
<name>ENO4_XENTR</name>
<accession>B0BM20</accession>
<organism>
    <name type="scientific">Xenopus tropicalis</name>
    <name type="common">Western clawed frog</name>
    <name type="synonym">Silurana tropicalis</name>
    <dbReference type="NCBI Taxonomy" id="8364"/>
    <lineage>
        <taxon>Eukaryota</taxon>
        <taxon>Metazoa</taxon>
        <taxon>Chordata</taxon>
        <taxon>Craniata</taxon>
        <taxon>Vertebrata</taxon>
        <taxon>Euteleostomi</taxon>
        <taxon>Amphibia</taxon>
        <taxon>Batrachia</taxon>
        <taxon>Anura</taxon>
        <taxon>Pipoidea</taxon>
        <taxon>Pipidae</taxon>
        <taxon>Xenopodinae</taxon>
        <taxon>Xenopus</taxon>
        <taxon>Silurana</taxon>
    </lineage>
</organism>
<comment type="catalytic activity">
    <reaction evidence="2">
        <text>(2R)-2-phosphoglycerate = phosphoenolpyruvate + H2O</text>
        <dbReference type="Rhea" id="RHEA:10164"/>
        <dbReference type="ChEBI" id="CHEBI:15377"/>
        <dbReference type="ChEBI" id="CHEBI:58289"/>
        <dbReference type="ChEBI" id="CHEBI:58702"/>
        <dbReference type="EC" id="4.2.1.11"/>
    </reaction>
</comment>
<comment type="pathway">
    <text evidence="2">Carbohydrate degradation; glycolysis; pyruvate from D-glyceraldehyde 3-phosphate: step 4/5.</text>
</comment>
<comment type="similarity">
    <text evidence="4">Belongs to the enolase family.</text>
</comment>
<comment type="caution">
    <text evidence="4">Although it belongs to the enolase family, Leu-332 is present instead of the conserved Glu which is expected to be an active site residue.</text>
</comment>
<proteinExistence type="evidence at transcript level"/>
<feature type="chain" id="PRO_0000348458" description="Enolase 4">
    <location>
        <begin position="1"/>
        <end position="574"/>
    </location>
</feature>
<feature type="region of interest" description="Disordered" evidence="3">
    <location>
        <begin position="165"/>
        <end position="221"/>
    </location>
</feature>
<feature type="compositionally biased region" description="Basic and acidic residues" evidence="3">
    <location>
        <begin position="165"/>
        <end position="175"/>
    </location>
</feature>
<feature type="compositionally biased region" description="Pro residues" evidence="3">
    <location>
        <begin position="179"/>
        <end position="189"/>
    </location>
</feature>
<feature type="compositionally biased region" description="Basic residues" evidence="3">
    <location>
        <begin position="193"/>
        <end position="203"/>
    </location>
</feature>
<feature type="active site" description="Proton acceptor" evidence="1">
    <location>
        <position position="467"/>
    </location>
</feature>
<feature type="binding site" evidence="1">
    <location>
        <position position="287"/>
    </location>
    <ligand>
        <name>substrate</name>
    </ligand>
</feature>
<feature type="binding site" evidence="1">
    <location>
        <position position="518"/>
    </location>
    <ligand>
        <name>substrate</name>
    </ligand>
</feature>
<sequence>MSYRAGDAARRARERYELKQAAAEFYRKLSVTERLEEALNSTFCLGPEDVYGHLANYFAQFSKPPTICQIRGRKVLDGTGEPTVEAEVFCTVKNMDKRICSSVISAASEHPKASKGPEQESNHSADIAIQWLNDLSPKLRGMSPDEQNKIDQLLSDFYQPKIEEEKERRQMEREASPMPLQPEPSPVTSPAPGKKKGSGKGKKAAVVEKPIPPEETPEAVVPGSPAIGALSLAVAKASSVLSKTPLYLHIRALRNEKLPTEFFMPTPMISILSCGTSSPGKLNLMKEVLIIPQTGLTVQQSLDMALMLQNQIVKQINAASKTGPAIKNVSPLGCMLIGGDRIEQPLDLICEACQHVGLELGTNLYLAINCAAHELMDYNKGKYEVLSGTFKSPDEMIDLYVDLINRQPAILALLDPLRKEDTVQWESLAKALGSKCYLFADAASKPVCKLLESGSMNSPPCSGTVIKHTNEITISQLLGVFKLIEGENRVAVLGCPYKESVGDSTADLAVGLGARFVKLGGLLRGERTTKYNRLLAIEDELTQAGALGFWTKNEFPVLCEVQNQPGPQETPETQ</sequence>
<gene>
    <name type="primary">eno4</name>
</gene>
<evidence type="ECO:0000250" key="1"/>
<evidence type="ECO:0000250" key="2">
    <source>
        <dbReference type="UniProtKB" id="Q8C042"/>
    </source>
</evidence>
<evidence type="ECO:0000256" key="3">
    <source>
        <dbReference type="SAM" id="MobiDB-lite"/>
    </source>
</evidence>
<evidence type="ECO:0000305" key="4"/>
<dbReference type="EC" id="4.2.1.11" evidence="2"/>
<dbReference type="EMBL" id="BC158253">
    <property type="protein sequence ID" value="AAI58254.1"/>
    <property type="molecule type" value="mRNA"/>
</dbReference>
<dbReference type="RefSeq" id="NP_001119992.1">
    <property type="nucleotide sequence ID" value="NM_001126520.1"/>
</dbReference>
<dbReference type="SMR" id="B0BM20"/>
<dbReference type="FunCoup" id="B0BM20">
    <property type="interactions" value="280"/>
</dbReference>
<dbReference type="STRING" id="8364.ENSXETP00000011412"/>
<dbReference type="PaxDb" id="8364-ENSXETP00000031321"/>
<dbReference type="GeneID" id="100144948"/>
<dbReference type="KEGG" id="xtr:100144948"/>
<dbReference type="AGR" id="Xenbase:XB-GENE-1009720"/>
<dbReference type="CTD" id="387712"/>
<dbReference type="Xenbase" id="XB-GENE-1009720">
    <property type="gene designation" value="eno4"/>
</dbReference>
<dbReference type="eggNOG" id="KOG2670">
    <property type="taxonomic scope" value="Eukaryota"/>
</dbReference>
<dbReference type="InParanoid" id="B0BM20"/>
<dbReference type="OMA" id="MKELICI"/>
<dbReference type="OrthoDB" id="10009078at2759"/>
<dbReference type="Reactome" id="R-XTR-70171">
    <property type="pathway name" value="Glycolysis"/>
</dbReference>
<dbReference type="Reactome" id="R-XTR-70263">
    <property type="pathway name" value="Gluconeogenesis"/>
</dbReference>
<dbReference type="UniPathway" id="UPA00109">
    <property type="reaction ID" value="UER00187"/>
</dbReference>
<dbReference type="Proteomes" id="UP000008143">
    <property type="component" value="Chromosome 7"/>
</dbReference>
<dbReference type="GO" id="GO:0000015">
    <property type="term" value="C:phosphopyruvate hydratase complex"/>
    <property type="evidence" value="ECO:0007669"/>
    <property type="project" value="InterPro"/>
</dbReference>
<dbReference type="GO" id="GO:0000287">
    <property type="term" value="F:magnesium ion binding"/>
    <property type="evidence" value="ECO:0007669"/>
    <property type="project" value="InterPro"/>
</dbReference>
<dbReference type="GO" id="GO:0004634">
    <property type="term" value="F:phosphopyruvate hydratase activity"/>
    <property type="evidence" value="ECO:0007669"/>
    <property type="project" value="UniProtKB-EC"/>
</dbReference>
<dbReference type="GO" id="GO:0006096">
    <property type="term" value="P:glycolytic process"/>
    <property type="evidence" value="ECO:0007669"/>
    <property type="project" value="UniProtKB-UniPathway"/>
</dbReference>
<dbReference type="CDD" id="cd22974">
    <property type="entry name" value="DD_ENO4"/>
    <property type="match status" value="1"/>
</dbReference>
<dbReference type="Gene3D" id="3.20.20.120">
    <property type="entry name" value="Enolase-like C-terminal domain"/>
    <property type="match status" value="1"/>
</dbReference>
<dbReference type="Gene3D" id="3.30.390.10">
    <property type="entry name" value="Enolase-like, N-terminal domain"/>
    <property type="match status" value="1"/>
</dbReference>
<dbReference type="InterPro" id="IPR047500">
    <property type="entry name" value="DD_ENO4"/>
</dbReference>
<dbReference type="InterPro" id="IPR000941">
    <property type="entry name" value="Enolase"/>
</dbReference>
<dbReference type="InterPro" id="IPR036849">
    <property type="entry name" value="Enolase-like_C_sf"/>
</dbReference>
<dbReference type="InterPro" id="IPR029017">
    <property type="entry name" value="Enolase-like_N"/>
</dbReference>
<dbReference type="InterPro" id="IPR020810">
    <property type="entry name" value="Enolase_C"/>
</dbReference>
<dbReference type="InterPro" id="IPR020811">
    <property type="entry name" value="Enolase_N"/>
</dbReference>
<dbReference type="PANTHER" id="PTHR11902">
    <property type="entry name" value="ENOLASE"/>
    <property type="match status" value="1"/>
</dbReference>
<dbReference type="PANTHER" id="PTHR11902:SF30">
    <property type="entry name" value="ENOLASE 4"/>
    <property type="match status" value="1"/>
</dbReference>
<dbReference type="Pfam" id="PF00113">
    <property type="entry name" value="Enolase_C"/>
    <property type="match status" value="1"/>
</dbReference>
<dbReference type="SMART" id="SM01192">
    <property type="entry name" value="Enolase_C"/>
    <property type="match status" value="1"/>
</dbReference>
<dbReference type="SMART" id="SM01193">
    <property type="entry name" value="Enolase_N"/>
    <property type="match status" value="1"/>
</dbReference>
<dbReference type="SUPFAM" id="SSF51604">
    <property type="entry name" value="Enolase C-terminal domain-like"/>
    <property type="match status" value="1"/>
</dbReference>
<dbReference type="SUPFAM" id="SSF54826">
    <property type="entry name" value="Enolase N-terminal domain-like"/>
    <property type="match status" value="1"/>
</dbReference>